<name>HOX3_ORYSJ</name>
<feature type="chain" id="PRO_0000331679" description="Homeobox-leucine zipper protein HOX3">
    <location>
        <begin position="1"/>
        <end position="229"/>
    </location>
</feature>
<feature type="DNA-binding region" description="Homeobox" evidence="1">
    <location>
        <begin position="75"/>
        <end position="134"/>
    </location>
</feature>
<feature type="region of interest" description="Disordered" evidence="2">
    <location>
        <begin position="1"/>
        <end position="82"/>
    </location>
</feature>
<feature type="region of interest" description="Leucine-zipper">
    <location>
        <begin position="133"/>
        <end position="177"/>
    </location>
</feature>
<feature type="region of interest" description="Disordered" evidence="2">
    <location>
        <begin position="198"/>
        <end position="229"/>
    </location>
</feature>
<feature type="compositionally biased region" description="Acidic residues" evidence="2">
    <location>
        <begin position="52"/>
        <end position="68"/>
    </location>
</feature>
<sequence>MMGATSPSGLELTMAVPGLSSSGSEGAGCNNNNAGGGCNMRDLDINQPASGGEEEEFPMGSVEEDEEERGVGGPHRPKKLRLSKEQSRLLEESFRLNHTLTPKQKEALAIKLKLRPRQVEVWFQNRRARTKLKQTEMECEYLKRCFGSLTEENRRLQREVEELRAMRVAPPTVLSPHTRQPLPASALTMCPRCERITAATGPPAVRPPPSSAAAAAPSPFHPRRPSAAF</sequence>
<evidence type="ECO:0000255" key="1">
    <source>
        <dbReference type="PROSITE-ProRule" id="PRU00108"/>
    </source>
</evidence>
<evidence type="ECO:0000256" key="2">
    <source>
        <dbReference type="SAM" id="MobiDB-lite"/>
    </source>
</evidence>
<evidence type="ECO:0000269" key="3">
    <source>
    </source>
</evidence>
<evidence type="ECO:0000269" key="4">
    <source>
    </source>
</evidence>
<evidence type="ECO:0000305" key="5"/>
<accession>Q0JKX1</accession>
<accession>A0A0P0V5W0</accession>
<accession>A2ZVX6</accession>
<organism>
    <name type="scientific">Oryza sativa subsp. japonica</name>
    <name type="common">Rice</name>
    <dbReference type="NCBI Taxonomy" id="39947"/>
    <lineage>
        <taxon>Eukaryota</taxon>
        <taxon>Viridiplantae</taxon>
        <taxon>Streptophyta</taxon>
        <taxon>Embryophyta</taxon>
        <taxon>Tracheophyta</taxon>
        <taxon>Spermatophyta</taxon>
        <taxon>Magnoliopsida</taxon>
        <taxon>Liliopsida</taxon>
        <taxon>Poales</taxon>
        <taxon>Poaceae</taxon>
        <taxon>BOP clade</taxon>
        <taxon>Oryzoideae</taxon>
        <taxon>Oryzeae</taxon>
        <taxon>Oryzinae</taxon>
        <taxon>Oryza</taxon>
        <taxon>Oryza sativa</taxon>
    </lineage>
</organism>
<proteinExistence type="evidence at protein level"/>
<dbReference type="EMBL" id="AP008207">
    <property type="protein sequence ID" value="BAF05607.1"/>
    <property type="molecule type" value="Genomic_DNA"/>
</dbReference>
<dbReference type="EMBL" id="AP014957">
    <property type="protein sequence ID" value="BAS73383.1"/>
    <property type="molecule type" value="Genomic_DNA"/>
</dbReference>
<dbReference type="EMBL" id="CM000138">
    <property type="protein sequence ID" value="EAZ12873.1"/>
    <property type="status" value="ALT_INIT"/>
    <property type="molecule type" value="Genomic_DNA"/>
</dbReference>
<dbReference type="RefSeq" id="XP_015645561.1">
    <property type="nucleotide sequence ID" value="XM_015790075.1"/>
</dbReference>
<dbReference type="SMR" id="Q0JKX1"/>
<dbReference type="FunCoup" id="Q0JKX1">
    <property type="interactions" value="23"/>
</dbReference>
<dbReference type="PaxDb" id="39947-Q0JKX1"/>
<dbReference type="EnsemblPlants" id="Os01t0643600-01">
    <property type="protein sequence ID" value="Os01t0643600-01"/>
    <property type="gene ID" value="Os01g0643600"/>
</dbReference>
<dbReference type="Gramene" id="Os01t0643600-01">
    <property type="protein sequence ID" value="Os01t0643600-01"/>
    <property type="gene ID" value="Os01g0643600"/>
</dbReference>
<dbReference type="KEGG" id="dosa:Os01g0643600"/>
<dbReference type="eggNOG" id="KOG0483">
    <property type="taxonomic scope" value="Eukaryota"/>
</dbReference>
<dbReference type="HOGENOM" id="CLU_049516_6_0_1"/>
<dbReference type="InParanoid" id="Q0JKX1"/>
<dbReference type="OMA" id="EGFGCNN"/>
<dbReference type="OrthoDB" id="6159439at2759"/>
<dbReference type="Proteomes" id="UP000000763">
    <property type="component" value="Chromosome 1"/>
</dbReference>
<dbReference type="Proteomes" id="UP000007752">
    <property type="component" value="Chromosome 1"/>
</dbReference>
<dbReference type="Proteomes" id="UP000059680">
    <property type="component" value="Chromosome 1"/>
</dbReference>
<dbReference type="GO" id="GO:0005634">
    <property type="term" value="C:nucleus"/>
    <property type="evidence" value="ECO:0007669"/>
    <property type="project" value="UniProtKB-SubCell"/>
</dbReference>
<dbReference type="GO" id="GO:0000981">
    <property type="term" value="F:DNA-binding transcription factor activity, RNA polymerase II-specific"/>
    <property type="evidence" value="ECO:0007669"/>
    <property type="project" value="InterPro"/>
</dbReference>
<dbReference type="GO" id="GO:0043565">
    <property type="term" value="F:sequence-specific DNA binding"/>
    <property type="evidence" value="ECO:0007669"/>
    <property type="project" value="InterPro"/>
</dbReference>
<dbReference type="CDD" id="cd00086">
    <property type="entry name" value="homeodomain"/>
    <property type="match status" value="1"/>
</dbReference>
<dbReference type="FunFam" id="1.10.10.60:FF:000577">
    <property type="entry name" value="Homeobox-leucine zipper protein 18"/>
    <property type="match status" value="1"/>
</dbReference>
<dbReference type="Gene3D" id="1.10.10.60">
    <property type="entry name" value="Homeodomain-like"/>
    <property type="match status" value="1"/>
</dbReference>
<dbReference type="InterPro" id="IPR001356">
    <property type="entry name" value="HD"/>
</dbReference>
<dbReference type="InterPro" id="IPR050762">
    <property type="entry name" value="HD-ZIP_Homeobox_LZ_Class_II"/>
</dbReference>
<dbReference type="InterPro" id="IPR017970">
    <property type="entry name" value="Homeobox_CS"/>
</dbReference>
<dbReference type="InterPro" id="IPR009057">
    <property type="entry name" value="Homeodomain-like_sf"/>
</dbReference>
<dbReference type="InterPro" id="IPR003106">
    <property type="entry name" value="Leu_zip_homeo"/>
</dbReference>
<dbReference type="PANTHER" id="PTHR45714:SF8">
    <property type="entry name" value="HOMEOBOX-LEUCINE ZIPPER PROTEIN ATHB-17"/>
    <property type="match status" value="1"/>
</dbReference>
<dbReference type="PANTHER" id="PTHR45714">
    <property type="entry name" value="HOMEOBOX-LEUCINE ZIPPER PROTEIN HAT14"/>
    <property type="match status" value="1"/>
</dbReference>
<dbReference type="Pfam" id="PF02183">
    <property type="entry name" value="HALZ"/>
    <property type="match status" value="1"/>
</dbReference>
<dbReference type="Pfam" id="PF00046">
    <property type="entry name" value="Homeodomain"/>
    <property type="match status" value="1"/>
</dbReference>
<dbReference type="SMART" id="SM00340">
    <property type="entry name" value="HALZ"/>
    <property type="match status" value="1"/>
</dbReference>
<dbReference type="SMART" id="SM00389">
    <property type="entry name" value="HOX"/>
    <property type="match status" value="1"/>
</dbReference>
<dbReference type="SUPFAM" id="SSF46689">
    <property type="entry name" value="Homeodomain-like"/>
    <property type="match status" value="1"/>
</dbReference>
<dbReference type="PROSITE" id="PS00027">
    <property type="entry name" value="HOMEOBOX_1"/>
    <property type="match status" value="1"/>
</dbReference>
<dbReference type="PROSITE" id="PS50071">
    <property type="entry name" value="HOMEOBOX_2"/>
    <property type="match status" value="1"/>
</dbReference>
<gene>
    <name type="primary">HOX3</name>
    <name type="ordered locus">Os01g0643600</name>
    <name type="ordered locus">LOC_Os01g45570</name>
    <name type="ORF">OsJ_002698</name>
</gene>
<comment type="function">
    <text evidence="3">Probable transcription repressor that binds to the DNA sequence 5'-CAAT[GC]ATTG-3'.</text>
</comment>
<comment type="subunit">
    <text evidence="3 5">Homodimer (Probable). May form a heterodimer with HOX1, HOX2 or HOX7.</text>
</comment>
<comment type="subcellular location">
    <subcellularLocation>
        <location evidence="5">Nucleus</location>
    </subcellularLocation>
</comment>
<comment type="tissue specificity">
    <text evidence="3 4">Expressed in seedlings, roots, leaves, nodes, internodes, flowers and embryo.</text>
</comment>
<comment type="similarity">
    <text evidence="5">Belongs to the HD-ZIP homeobox family. Class II subfamily.</text>
</comment>
<comment type="sequence caution" evidence="5">
    <conflict type="erroneous initiation">
        <sequence resource="EMBL-CDS" id="EAZ12873"/>
    </conflict>
    <text>Truncated N-terminus.</text>
</comment>
<protein>
    <recommendedName>
        <fullName>Homeobox-leucine zipper protein HOX3</fullName>
    </recommendedName>
    <alternativeName>
        <fullName>HD-ZIP protein HOX3</fullName>
    </alternativeName>
    <alternativeName>
        <fullName>Homeodomain transcription factor HOX3</fullName>
    </alternativeName>
    <alternativeName>
        <fullName>OsHox3</fullName>
    </alternativeName>
</protein>
<reference key="1">
    <citation type="journal article" date="2005" name="Nature">
        <title>The map-based sequence of the rice genome.</title>
        <authorList>
            <consortium name="International rice genome sequencing project (IRGSP)"/>
        </authorList>
    </citation>
    <scope>NUCLEOTIDE SEQUENCE [LARGE SCALE GENOMIC DNA]</scope>
    <source>
        <strain>cv. Nipponbare</strain>
    </source>
</reference>
<reference key="2">
    <citation type="journal article" date="2008" name="Nucleic Acids Res.">
        <title>The rice annotation project database (RAP-DB): 2008 update.</title>
        <authorList>
            <consortium name="The rice annotation project (RAP)"/>
        </authorList>
    </citation>
    <scope>GENOME REANNOTATION</scope>
    <source>
        <strain>cv. Nipponbare</strain>
    </source>
</reference>
<reference key="3">
    <citation type="journal article" date="2013" name="Rice">
        <title>Improvement of the Oryza sativa Nipponbare reference genome using next generation sequence and optical map data.</title>
        <authorList>
            <person name="Kawahara Y."/>
            <person name="de la Bastide M."/>
            <person name="Hamilton J.P."/>
            <person name="Kanamori H."/>
            <person name="McCombie W.R."/>
            <person name="Ouyang S."/>
            <person name="Schwartz D.C."/>
            <person name="Tanaka T."/>
            <person name="Wu J."/>
            <person name="Zhou S."/>
            <person name="Childs K.L."/>
            <person name="Davidson R.M."/>
            <person name="Lin H."/>
            <person name="Quesada-Ocampo L."/>
            <person name="Vaillancourt B."/>
            <person name="Sakai H."/>
            <person name="Lee S.S."/>
            <person name="Kim J."/>
            <person name="Numa H."/>
            <person name="Itoh T."/>
            <person name="Buell C.R."/>
            <person name="Matsumoto T."/>
        </authorList>
    </citation>
    <scope>GENOME REANNOTATION</scope>
    <source>
        <strain>cv. Nipponbare</strain>
    </source>
</reference>
<reference key="4">
    <citation type="journal article" date="2005" name="PLoS Biol.">
        <title>The genomes of Oryza sativa: a history of duplications.</title>
        <authorList>
            <person name="Yu J."/>
            <person name="Wang J."/>
            <person name="Lin W."/>
            <person name="Li S."/>
            <person name="Li H."/>
            <person name="Zhou J."/>
            <person name="Ni P."/>
            <person name="Dong W."/>
            <person name="Hu S."/>
            <person name="Zeng C."/>
            <person name="Zhang J."/>
            <person name="Zhang Y."/>
            <person name="Li R."/>
            <person name="Xu Z."/>
            <person name="Li S."/>
            <person name="Li X."/>
            <person name="Zheng H."/>
            <person name="Cong L."/>
            <person name="Lin L."/>
            <person name="Yin J."/>
            <person name="Geng J."/>
            <person name="Li G."/>
            <person name="Shi J."/>
            <person name="Liu J."/>
            <person name="Lv H."/>
            <person name="Li J."/>
            <person name="Wang J."/>
            <person name="Deng Y."/>
            <person name="Ran L."/>
            <person name="Shi X."/>
            <person name="Wang X."/>
            <person name="Wu Q."/>
            <person name="Li C."/>
            <person name="Ren X."/>
            <person name="Wang J."/>
            <person name="Wang X."/>
            <person name="Li D."/>
            <person name="Liu D."/>
            <person name="Zhang X."/>
            <person name="Ji Z."/>
            <person name="Zhao W."/>
            <person name="Sun Y."/>
            <person name="Zhang Z."/>
            <person name="Bao J."/>
            <person name="Han Y."/>
            <person name="Dong L."/>
            <person name="Ji J."/>
            <person name="Chen P."/>
            <person name="Wu S."/>
            <person name="Liu J."/>
            <person name="Xiao Y."/>
            <person name="Bu D."/>
            <person name="Tan J."/>
            <person name="Yang L."/>
            <person name="Ye C."/>
            <person name="Zhang J."/>
            <person name="Xu J."/>
            <person name="Zhou Y."/>
            <person name="Yu Y."/>
            <person name="Zhang B."/>
            <person name="Zhuang S."/>
            <person name="Wei H."/>
            <person name="Liu B."/>
            <person name="Lei M."/>
            <person name="Yu H."/>
            <person name="Li Y."/>
            <person name="Xu H."/>
            <person name="Wei S."/>
            <person name="He X."/>
            <person name="Fang L."/>
            <person name="Zhang Z."/>
            <person name="Zhang Y."/>
            <person name="Huang X."/>
            <person name="Su Z."/>
            <person name="Tong W."/>
            <person name="Li J."/>
            <person name="Tong Z."/>
            <person name="Li S."/>
            <person name="Ye J."/>
            <person name="Wang L."/>
            <person name="Fang L."/>
            <person name="Lei T."/>
            <person name="Chen C.-S."/>
            <person name="Chen H.-C."/>
            <person name="Xu Z."/>
            <person name="Li H."/>
            <person name="Huang H."/>
            <person name="Zhang F."/>
            <person name="Xu H."/>
            <person name="Li N."/>
            <person name="Zhao C."/>
            <person name="Li S."/>
            <person name="Dong L."/>
            <person name="Huang Y."/>
            <person name="Li L."/>
            <person name="Xi Y."/>
            <person name="Qi Q."/>
            <person name="Li W."/>
            <person name="Zhang B."/>
            <person name="Hu W."/>
            <person name="Zhang Y."/>
            <person name="Tian X."/>
            <person name="Jiao Y."/>
            <person name="Liang X."/>
            <person name="Jin J."/>
            <person name="Gao L."/>
            <person name="Zheng W."/>
            <person name="Hao B."/>
            <person name="Liu S.-M."/>
            <person name="Wang W."/>
            <person name="Yuan L."/>
            <person name="Cao M."/>
            <person name="McDermott J."/>
            <person name="Samudrala R."/>
            <person name="Wang J."/>
            <person name="Wong G.K.-S."/>
            <person name="Yang H."/>
        </authorList>
    </citation>
    <scope>NUCLEOTIDE SEQUENCE [LARGE SCALE GENOMIC DNA]</scope>
    <source>
        <strain>cv. Nipponbare</strain>
    </source>
</reference>
<reference key="5">
    <citation type="journal article" date="2000" name="Mol. Gen. Genet.">
        <title>HD-Zip proteins of families I and II from rice: interactions and functional properties.</title>
        <authorList>
            <person name="Meijer A.H."/>
            <person name="de Kam R.J."/>
            <person name="d'Erfurth I."/>
            <person name="Shen W.-B."/>
            <person name="Hoge J.H.C."/>
        </authorList>
    </citation>
    <scope>FUNCTION</scope>
    <scope>SUBUNIT</scope>
    <scope>TISSUE SPECIFICITY</scope>
</reference>
<reference key="6">
    <citation type="journal article" date="2008" name="Plant Mol. Biol.">
        <title>A genome-wide survey of HD-Zip genes in rice and analysis of drought-responsive family members.</title>
        <authorList>
            <person name="Agalou A."/>
            <person name="Purwantomo S."/>
            <person name="Oevernaes E."/>
            <person name="Johannesson H."/>
            <person name="Zhu X."/>
            <person name="Estiati A."/>
            <person name="de Kam R.J."/>
            <person name="Engstroem P."/>
            <person name="Slamet-Loedin I.H."/>
            <person name="Zhu Z."/>
            <person name="Wang M."/>
            <person name="Xiong L."/>
            <person name="Meijer A.H."/>
            <person name="Ouwerkerk P.B.F."/>
        </authorList>
    </citation>
    <scope>TISSUE SPECIFICITY</scope>
    <scope>GENE FAMILY</scope>
    <scope>NOMENCLATURE</scope>
</reference>
<keyword id="KW-0238">DNA-binding</keyword>
<keyword id="KW-0371">Homeobox</keyword>
<keyword id="KW-0539">Nucleus</keyword>
<keyword id="KW-1185">Reference proteome</keyword>
<keyword id="KW-0804">Transcription</keyword>
<keyword id="KW-0805">Transcription regulation</keyword>